<reference evidence="9" key="1">
    <citation type="journal article" date="1998" name="Science">
        <title>Genome sequence of the nematode C. elegans: a platform for investigating biology.</title>
        <authorList>
            <consortium name="The C. elegans sequencing consortium"/>
        </authorList>
    </citation>
    <scope>NUCLEOTIDE SEQUENCE [LARGE SCALE GENOMIC DNA]</scope>
    <source>
        <strain evidence="9">Bristol N2</strain>
    </source>
</reference>
<reference evidence="8" key="2">
    <citation type="journal article" date="2006" name="Genetics">
        <title>Searching for neuronal left/right asymmetry: genomewide analysis of nematode receptor-type guanylyl cyclases.</title>
        <authorList>
            <person name="Ortiz C.O."/>
            <person name="Etchberger J.F."/>
            <person name="Posy S.L."/>
            <person name="Frokjaer-Jensen C."/>
            <person name="Lockery S."/>
            <person name="Honig B."/>
            <person name="Hobert O."/>
        </authorList>
    </citation>
    <scope>TISSUE SPECIFICITY</scope>
</reference>
<sequence length="1088" mass="122824">MLFLRLFIFTPFLILANCQARRTIKVGLLFVQNVSSLQVGIGYRTSAAAVLVTKNKIREDHVLDGFDFEFLWDFDECNEILGAGKTVDLLEVKKVDVIFGPTCSRPALISSALATYYNIPIFEWGLTSTRQLTDVKRFPTTLPFSVNSYSLAMAILGTLKQFQWTEFVFLYCNDGDDEKCESLKDDVQTVASAHEELSLAYTFRIQSKKLEDMRAAIVEIKKRGRIIVACVASGNGSKRTLMQAVALENANNSEYVYIMAETNSRGFVVEEVGGKWHYLWEGKFDDSDTFSTEDSRTSMANLLFLVDNMGMNNVVTPQYLNFSKNVIEMMKDEPFNCVEDCVGEEYSSVAKYAGQLADAFYAYAVAVNRLLTANPQAEIRNGTMILRNIGMTFEGVGGGDLTVDPDSARTSEIIMIGLNSSRLPETYGKLIINNQSVHFEQLYSDEVMDVWNGRQRPKAKPTCGFTGTQCPPDFVRDYLVIVIIIVMFLIFAVSAAVGAVFYAIRQKRKEIERQDELWHVEASHLKPISKKSKSEASQRSFASGPSTSTKLTVESRTETTRFIFYIYQVRNNEVVAANKHDFRPQLTDVERSELRQMRSLDHDNLNKFIGLCLNSQQLLSIWRYCSRGSLADVISRSSMQMDSFFMLSLIRDIANGLGFIHTSMLHFHGYLSSRSCLIDDRWQVKISDFGLNEVRGMDKLSTENMLWWAPEVLRGLEQRSKEADIYSFGIICSEVITRSSAFDLENRKEKPEEIIYQLKKGGFNAIRPSLLTDEALEINPALVHLIRDCWTEKPSERPPIDQVRSLLRGMNDGKKGNLMDHVFNMLETYASTLEEEVNERTKELVEEQKKSDVLLYRMLPKTVAEKLKAGISIEPETFELVTIFFSDVVQFTTLASKCTPLQVVQLLNDLYTIFDSIIEQNDVYKVETIGDGYLCVSGLPHRNGHDHIKHIARMSLAFLSSLAEFRVAHMPSERINLRIGINCGSVVAGVVGLTMPRYCLFGDAVNTASRMESNGKPGRIHVSSEANHLLTHVVGGFRTEERGEVIIKGKGVMNTYWLLGENDSVPVKSNMRKRENTPSMARSITPEI</sequence>
<dbReference type="EC" id="4.6.1.2" evidence="1"/>
<dbReference type="EMBL" id="BX284601">
    <property type="protein sequence ID" value="CDO41084.1"/>
    <property type="molecule type" value="Genomic_DNA"/>
</dbReference>
<dbReference type="EMBL" id="BX284601">
    <property type="protein sequence ID" value="CDO41085.1"/>
    <property type="molecule type" value="Genomic_DNA"/>
</dbReference>
<dbReference type="RefSeq" id="NP_001293327.1">
    <molecule id="X5M8U1-1"/>
    <property type="nucleotide sequence ID" value="NM_001306398.3"/>
</dbReference>
<dbReference type="RefSeq" id="NP_001293328.1">
    <molecule id="X5M8U1-2"/>
    <property type="nucleotide sequence ID" value="NM_001306399.3"/>
</dbReference>
<dbReference type="SMR" id="X5M8U1"/>
<dbReference type="FunCoup" id="X5M8U1">
    <property type="interactions" value="170"/>
</dbReference>
<dbReference type="STRING" id="6239.W03F11.2a.1"/>
<dbReference type="GlyCosmos" id="X5M8U1">
    <property type="glycosylation" value="7 sites, No reported glycans"/>
</dbReference>
<dbReference type="PaxDb" id="6239-W03F11.2"/>
<dbReference type="EnsemblMetazoa" id="W03F11.2a.1">
    <molecule id="X5M8U1-1"/>
    <property type="protein sequence ID" value="W03F11.2a.1"/>
    <property type="gene ID" value="WBGene00001542"/>
</dbReference>
<dbReference type="EnsemblMetazoa" id="W03F11.2b.1">
    <molecule id="X5M8U1-2"/>
    <property type="protein sequence ID" value="W03F11.2b.1"/>
    <property type="gene ID" value="WBGene00001542"/>
</dbReference>
<dbReference type="GeneID" id="191649"/>
<dbReference type="KEGG" id="cel:CELE_W03F11.2"/>
<dbReference type="AGR" id="WB:WBGene00001542"/>
<dbReference type="CTD" id="191649"/>
<dbReference type="WormBase" id="W03F11.2a">
    <molecule id="X5M8U1-1"/>
    <property type="protein sequence ID" value="CE49683"/>
    <property type="gene ID" value="WBGene00001542"/>
    <property type="gene designation" value="gcy-17"/>
</dbReference>
<dbReference type="WormBase" id="W03F11.2b">
    <molecule id="X5M8U1-2"/>
    <property type="protein sequence ID" value="CE49714"/>
    <property type="gene ID" value="WBGene00001542"/>
    <property type="gene designation" value="gcy-17"/>
</dbReference>
<dbReference type="eggNOG" id="KOG1023">
    <property type="taxonomic scope" value="Eukaryota"/>
</dbReference>
<dbReference type="InParanoid" id="X5M8U1"/>
<dbReference type="OMA" id="FRISHMP"/>
<dbReference type="OrthoDB" id="302535at2759"/>
<dbReference type="Reactome" id="R-CEL-2514859">
    <property type="pathway name" value="Inactivation, recovery and regulation of the phototransduction cascade"/>
</dbReference>
<dbReference type="PRO" id="PR:X5M8U1"/>
<dbReference type="Proteomes" id="UP000001940">
    <property type="component" value="Chromosome I"/>
</dbReference>
<dbReference type="Bgee" id="WBGene00001542">
    <property type="expression patterns" value="Expressed in larva"/>
</dbReference>
<dbReference type="GO" id="GO:0005886">
    <property type="term" value="C:plasma membrane"/>
    <property type="evidence" value="ECO:0000318"/>
    <property type="project" value="GO_Central"/>
</dbReference>
<dbReference type="GO" id="GO:0005524">
    <property type="term" value="F:ATP binding"/>
    <property type="evidence" value="ECO:0007669"/>
    <property type="project" value="InterPro"/>
</dbReference>
<dbReference type="GO" id="GO:0005525">
    <property type="term" value="F:GTP binding"/>
    <property type="evidence" value="ECO:0007669"/>
    <property type="project" value="UniProtKB-KW"/>
</dbReference>
<dbReference type="GO" id="GO:0004383">
    <property type="term" value="F:guanylate cyclase activity"/>
    <property type="evidence" value="ECO:0000318"/>
    <property type="project" value="GO_Central"/>
</dbReference>
<dbReference type="GO" id="GO:0001653">
    <property type="term" value="F:peptide receptor activity"/>
    <property type="evidence" value="ECO:0000318"/>
    <property type="project" value="GO_Central"/>
</dbReference>
<dbReference type="GO" id="GO:0004672">
    <property type="term" value="F:protein kinase activity"/>
    <property type="evidence" value="ECO:0007669"/>
    <property type="project" value="InterPro"/>
</dbReference>
<dbReference type="GO" id="GO:0006182">
    <property type="term" value="P:cGMP biosynthetic process"/>
    <property type="evidence" value="ECO:0000318"/>
    <property type="project" value="GO_Central"/>
</dbReference>
<dbReference type="GO" id="GO:0035556">
    <property type="term" value="P:intracellular signal transduction"/>
    <property type="evidence" value="ECO:0007669"/>
    <property type="project" value="InterPro"/>
</dbReference>
<dbReference type="GO" id="GO:0007168">
    <property type="term" value="P:receptor guanylyl cyclase signaling pathway"/>
    <property type="evidence" value="ECO:0000318"/>
    <property type="project" value="GO_Central"/>
</dbReference>
<dbReference type="CDD" id="cd07302">
    <property type="entry name" value="CHD"/>
    <property type="match status" value="1"/>
</dbReference>
<dbReference type="CDD" id="cd06352">
    <property type="entry name" value="PBP1_NPR_GC-like"/>
    <property type="match status" value="1"/>
</dbReference>
<dbReference type="FunFam" id="1.10.510.10:FF:000990">
    <property type="entry name" value="Guanylate cyclase"/>
    <property type="match status" value="1"/>
</dbReference>
<dbReference type="FunFam" id="3.30.70.1230:FF:000023">
    <property type="entry name" value="Guanylate cyclase"/>
    <property type="match status" value="1"/>
</dbReference>
<dbReference type="FunFam" id="3.40.50.2300:FF:000241">
    <property type="entry name" value="Guanylate cyclase"/>
    <property type="match status" value="1"/>
</dbReference>
<dbReference type="FunFam" id="3.40.50.2300:FF:000547">
    <property type="entry name" value="Guanylate cyclase"/>
    <property type="match status" value="1"/>
</dbReference>
<dbReference type="Gene3D" id="3.40.50.2300">
    <property type="match status" value="2"/>
</dbReference>
<dbReference type="Gene3D" id="6.10.250.780">
    <property type="match status" value="1"/>
</dbReference>
<dbReference type="Gene3D" id="3.30.70.1230">
    <property type="entry name" value="Nucleotide cyclase"/>
    <property type="match status" value="1"/>
</dbReference>
<dbReference type="Gene3D" id="1.10.510.10">
    <property type="entry name" value="Transferase(Phosphotransferase) domain 1"/>
    <property type="match status" value="1"/>
</dbReference>
<dbReference type="InterPro" id="IPR001054">
    <property type="entry name" value="A/G_cyclase"/>
</dbReference>
<dbReference type="InterPro" id="IPR018297">
    <property type="entry name" value="A/G_cyclase_CS"/>
</dbReference>
<dbReference type="InterPro" id="IPR001828">
    <property type="entry name" value="ANF_lig-bd_rcpt"/>
</dbReference>
<dbReference type="InterPro" id="IPR050401">
    <property type="entry name" value="Cyclic_nucleotide_synthase"/>
</dbReference>
<dbReference type="InterPro" id="IPR011009">
    <property type="entry name" value="Kinase-like_dom_sf"/>
</dbReference>
<dbReference type="InterPro" id="IPR029787">
    <property type="entry name" value="Nucleotide_cyclase"/>
</dbReference>
<dbReference type="InterPro" id="IPR028082">
    <property type="entry name" value="Peripla_BP_I"/>
</dbReference>
<dbReference type="InterPro" id="IPR000719">
    <property type="entry name" value="Prot_kinase_dom"/>
</dbReference>
<dbReference type="InterPro" id="IPR001245">
    <property type="entry name" value="Ser-Thr/Tyr_kinase_cat_dom"/>
</dbReference>
<dbReference type="PANTHER" id="PTHR11920">
    <property type="entry name" value="GUANYLYL CYCLASE"/>
    <property type="match status" value="1"/>
</dbReference>
<dbReference type="PANTHER" id="PTHR11920:SF363">
    <property type="entry name" value="RECEPTOR-TYPE GUANYLATE CYCLASE GCY-17"/>
    <property type="match status" value="1"/>
</dbReference>
<dbReference type="Pfam" id="PF01094">
    <property type="entry name" value="ANF_receptor"/>
    <property type="match status" value="1"/>
</dbReference>
<dbReference type="Pfam" id="PF00211">
    <property type="entry name" value="Guanylate_cyc"/>
    <property type="match status" value="1"/>
</dbReference>
<dbReference type="Pfam" id="PF07714">
    <property type="entry name" value="PK_Tyr_Ser-Thr"/>
    <property type="match status" value="1"/>
</dbReference>
<dbReference type="SMART" id="SM00044">
    <property type="entry name" value="CYCc"/>
    <property type="match status" value="1"/>
</dbReference>
<dbReference type="SUPFAM" id="SSF55073">
    <property type="entry name" value="Nucleotide cyclase"/>
    <property type="match status" value="1"/>
</dbReference>
<dbReference type="SUPFAM" id="SSF53822">
    <property type="entry name" value="Periplasmic binding protein-like I"/>
    <property type="match status" value="1"/>
</dbReference>
<dbReference type="SUPFAM" id="SSF56112">
    <property type="entry name" value="Protein kinase-like (PK-like)"/>
    <property type="match status" value="1"/>
</dbReference>
<dbReference type="PROSITE" id="PS00452">
    <property type="entry name" value="GUANYLATE_CYCLASE_1"/>
    <property type="match status" value="1"/>
</dbReference>
<dbReference type="PROSITE" id="PS50125">
    <property type="entry name" value="GUANYLATE_CYCLASE_2"/>
    <property type="match status" value="1"/>
</dbReference>
<dbReference type="PROSITE" id="PS50011">
    <property type="entry name" value="PROTEIN_KINASE_DOM"/>
    <property type="match status" value="1"/>
</dbReference>
<name>GCY17_CAEEL</name>
<accession>X5M8U1</accession>
<accession>X5LV47</accession>
<keyword id="KW-0025">Alternative splicing</keyword>
<keyword id="KW-1003">Cell membrane</keyword>
<keyword id="KW-0141">cGMP biosynthesis</keyword>
<keyword id="KW-0175">Coiled coil</keyword>
<keyword id="KW-0325">Glycoprotein</keyword>
<keyword id="KW-0342">GTP-binding</keyword>
<keyword id="KW-0456">Lyase</keyword>
<keyword id="KW-0472">Membrane</keyword>
<keyword id="KW-0547">Nucleotide-binding</keyword>
<keyword id="KW-0675">Receptor</keyword>
<keyword id="KW-1185">Reference proteome</keyword>
<keyword id="KW-0732">Signal</keyword>
<keyword id="KW-0812">Transmembrane</keyword>
<keyword id="KW-1133">Transmembrane helix</keyword>
<evidence type="ECO:0000250" key="1">
    <source>
        <dbReference type="UniProtKB" id="Q19187"/>
    </source>
</evidence>
<evidence type="ECO:0000255" key="2"/>
<evidence type="ECO:0000255" key="3">
    <source>
        <dbReference type="PROSITE-ProRule" id="PRU00099"/>
    </source>
</evidence>
<evidence type="ECO:0000255" key="4">
    <source>
        <dbReference type="PROSITE-ProRule" id="PRU00159"/>
    </source>
</evidence>
<evidence type="ECO:0000255" key="5">
    <source>
        <dbReference type="PROSITE-ProRule" id="PRU00498"/>
    </source>
</evidence>
<evidence type="ECO:0000256" key="6">
    <source>
        <dbReference type="SAM" id="MobiDB-lite"/>
    </source>
</evidence>
<evidence type="ECO:0000269" key="7">
    <source>
    </source>
</evidence>
<evidence type="ECO:0000305" key="8"/>
<evidence type="ECO:0000312" key="9">
    <source>
        <dbReference type="Proteomes" id="UP000001940"/>
    </source>
</evidence>
<evidence type="ECO:0000312" key="10">
    <source>
        <dbReference type="WormBase" id="W03F11.2a"/>
    </source>
</evidence>
<evidence type="ECO:0000312" key="11">
    <source>
        <dbReference type="WormBase" id="W03F11.2b"/>
    </source>
</evidence>
<organism evidence="9">
    <name type="scientific">Caenorhabditis elegans</name>
    <dbReference type="NCBI Taxonomy" id="6239"/>
    <lineage>
        <taxon>Eukaryota</taxon>
        <taxon>Metazoa</taxon>
        <taxon>Ecdysozoa</taxon>
        <taxon>Nematoda</taxon>
        <taxon>Chromadorea</taxon>
        <taxon>Rhabditida</taxon>
        <taxon>Rhabditina</taxon>
        <taxon>Rhabditomorpha</taxon>
        <taxon>Rhabditoidea</taxon>
        <taxon>Rhabditidae</taxon>
        <taxon>Peloderinae</taxon>
        <taxon>Caenorhabditis</taxon>
    </lineage>
</organism>
<protein>
    <recommendedName>
        <fullName evidence="8">Receptor-type guanylate cyclase gcy-17</fullName>
        <ecNumber evidence="1">4.6.1.2</ecNumber>
    </recommendedName>
</protein>
<gene>
    <name evidence="10" type="primary">gcy-17</name>
    <name evidence="10" type="ORF">W03F11.2</name>
</gene>
<feature type="signal peptide" evidence="2">
    <location>
        <begin position="1"/>
        <end position="20"/>
    </location>
</feature>
<feature type="chain" id="PRO_0000433285" description="Receptor-type guanylate cyclase gcy-17" evidence="2">
    <location>
        <begin position="21"/>
        <end position="1088"/>
    </location>
</feature>
<feature type="topological domain" description="Extracellular" evidence="2">
    <location>
        <begin position="21"/>
        <end position="480"/>
    </location>
</feature>
<feature type="transmembrane region" description="Helical" evidence="2">
    <location>
        <begin position="481"/>
        <end position="501"/>
    </location>
</feature>
<feature type="topological domain" description="Cytoplasmic" evidence="2">
    <location>
        <begin position="502"/>
        <end position="1088"/>
    </location>
</feature>
<feature type="domain" description="Protein kinase" evidence="4">
    <location>
        <begin position="535"/>
        <end position="824"/>
    </location>
</feature>
<feature type="domain" description="Guanylate cyclase" evidence="3">
    <location>
        <begin position="882"/>
        <end position="1012"/>
    </location>
</feature>
<feature type="region of interest" description="Disordered" evidence="6">
    <location>
        <begin position="529"/>
        <end position="552"/>
    </location>
</feature>
<feature type="region of interest" description="Disordered" evidence="6">
    <location>
        <begin position="1069"/>
        <end position="1088"/>
    </location>
</feature>
<feature type="coiled-coil region" evidence="2">
    <location>
        <begin position="826"/>
        <end position="854"/>
    </location>
</feature>
<feature type="compositionally biased region" description="Polar residues" evidence="6">
    <location>
        <begin position="535"/>
        <end position="552"/>
    </location>
</feature>
<feature type="glycosylation site" description="N-linked (GlcNAc...) asparagine" evidence="5">
    <location>
        <position position="33"/>
    </location>
</feature>
<feature type="glycosylation site" description="N-linked (GlcNAc...) asparagine" evidence="5">
    <location>
        <position position="235"/>
    </location>
</feature>
<feature type="glycosylation site" description="N-linked (GlcNAc...) asparagine" evidence="5">
    <location>
        <position position="251"/>
    </location>
</feature>
<feature type="glycosylation site" description="N-linked (GlcNAc...) asparagine" evidence="5">
    <location>
        <position position="321"/>
    </location>
</feature>
<feature type="glycosylation site" description="N-linked (GlcNAc...) asparagine" evidence="5">
    <location>
        <position position="381"/>
    </location>
</feature>
<feature type="glycosylation site" description="N-linked (GlcNAc...) asparagine" evidence="5">
    <location>
        <position position="419"/>
    </location>
</feature>
<feature type="glycosylation site" description="N-linked (GlcNAc...) asparagine" evidence="5">
    <location>
        <position position="434"/>
    </location>
</feature>
<feature type="splice variant" id="VSP_057705" description="In isoform b." evidence="8">
    <location>
        <begin position="569"/>
        <end position="571"/>
    </location>
</feature>
<comment type="function">
    <text evidence="1">Guanylate cyclase involved in the production of the second messenger cGMP (By similarity).</text>
</comment>
<comment type="catalytic activity">
    <reaction evidence="1">
        <text>GTP = 3',5'-cyclic GMP + diphosphate</text>
        <dbReference type="Rhea" id="RHEA:13665"/>
        <dbReference type="ChEBI" id="CHEBI:33019"/>
        <dbReference type="ChEBI" id="CHEBI:37565"/>
        <dbReference type="ChEBI" id="CHEBI:57746"/>
        <dbReference type="EC" id="4.6.1.2"/>
    </reaction>
</comment>
<comment type="subcellular location">
    <subcellularLocation>
        <location evidence="8">Cell membrane</location>
        <topology evidence="8">Single-pass type I membrane protein</topology>
    </subcellularLocation>
</comment>
<comment type="alternative products">
    <event type="alternative splicing"/>
    <isoform>
        <id>X5M8U1-1</id>
        <name evidence="10">a</name>
        <sequence type="displayed"/>
    </isoform>
    <isoform>
        <id>X5M8U1-2</id>
        <name evidence="11">b</name>
        <sequence type="described" ref="VSP_057705"/>
    </isoform>
</comment>
<comment type="tissue specificity">
    <text evidence="7">Expressed in PHA sensory neurons.</text>
</comment>
<comment type="domain">
    <text evidence="4">The protein kinase domain is predicted to be catalytically inactive.</text>
</comment>
<comment type="similarity">
    <text evidence="3">Belongs to the adenylyl cyclase class-4/guanylyl cyclase family.</text>
</comment>
<proteinExistence type="evidence at transcript level"/>